<accession>Q1H4L2</accession>
<proteinExistence type="inferred from homology"/>
<dbReference type="EC" id="2.7.7.6" evidence="1"/>
<dbReference type="EMBL" id="CP000284">
    <property type="protein sequence ID" value="ABE48575.1"/>
    <property type="molecule type" value="Genomic_DNA"/>
</dbReference>
<dbReference type="RefSeq" id="WP_011478672.1">
    <property type="nucleotide sequence ID" value="NC_007947.1"/>
</dbReference>
<dbReference type="SMR" id="Q1H4L2"/>
<dbReference type="STRING" id="265072.Mfla_0304"/>
<dbReference type="KEGG" id="mfa:Mfla_0304"/>
<dbReference type="eggNOG" id="COG0202">
    <property type="taxonomic scope" value="Bacteria"/>
</dbReference>
<dbReference type="HOGENOM" id="CLU_053084_0_0_4"/>
<dbReference type="OrthoDB" id="9805706at2"/>
<dbReference type="Proteomes" id="UP000002440">
    <property type="component" value="Chromosome"/>
</dbReference>
<dbReference type="GO" id="GO:0005737">
    <property type="term" value="C:cytoplasm"/>
    <property type="evidence" value="ECO:0007669"/>
    <property type="project" value="UniProtKB-ARBA"/>
</dbReference>
<dbReference type="GO" id="GO:0000428">
    <property type="term" value="C:DNA-directed RNA polymerase complex"/>
    <property type="evidence" value="ECO:0007669"/>
    <property type="project" value="UniProtKB-KW"/>
</dbReference>
<dbReference type="GO" id="GO:0003677">
    <property type="term" value="F:DNA binding"/>
    <property type="evidence" value="ECO:0007669"/>
    <property type="project" value="UniProtKB-UniRule"/>
</dbReference>
<dbReference type="GO" id="GO:0003899">
    <property type="term" value="F:DNA-directed RNA polymerase activity"/>
    <property type="evidence" value="ECO:0007669"/>
    <property type="project" value="UniProtKB-UniRule"/>
</dbReference>
<dbReference type="GO" id="GO:0046983">
    <property type="term" value="F:protein dimerization activity"/>
    <property type="evidence" value="ECO:0007669"/>
    <property type="project" value="InterPro"/>
</dbReference>
<dbReference type="GO" id="GO:0006351">
    <property type="term" value="P:DNA-templated transcription"/>
    <property type="evidence" value="ECO:0007669"/>
    <property type="project" value="UniProtKB-UniRule"/>
</dbReference>
<dbReference type="CDD" id="cd06928">
    <property type="entry name" value="RNAP_alpha_NTD"/>
    <property type="match status" value="1"/>
</dbReference>
<dbReference type="FunFam" id="1.10.150.20:FF:000001">
    <property type="entry name" value="DNA-directed RNA polymerase subunit alpha"/>
    <property type="match status" value="1"/>
</dbReference>
<dbReference type="FunFam" id="2.170.120.12:FF:000001">
    <property type="entry name" value="DNA-directed RNA polymerase subunit alpha"/>
    <property type="match status" value="1"/>
</dbReference>
<dbReference type="Gene3D" id="1.10.150.20">
    <property type="entry name" value="5' to 3' exonuclease, C-terminal subdomain"/>
    <property type="match status" value="1"/>
</dbReference>
<dbReference type="Gene3D" id="2.170.120.12">
    <property type="entry name" value="DNA-directed RNA polymerase, insert domain"/>
    <property type="match status" value="1"/>
</dbReference>
<dbReference type="Gene3D" id="3.30.1360.10">
    <property type="entry name" value="RNA polymerase, RBP11-like subunit"/>
    <property type="match status" value="1"/>
</dbReference>
<dbReference type="HAMAP" id="MF_00059">
    <property type="entry name" value="RNApol_bact_RpoA"/>
    <property type="match status" value="1"/>
</dbReference>
<dbReference type="InterPro" id="IPR011262">
    <property type="entry name" value="DNA-dir_RNA_pol_insert"/>
</dbReference>
<dbReference type="InterPro" id="IPR011263">
    <property type="entry name" value="DNA-dir_RNA_pol_RpoA/D/Rpb3"/>
</dbReference>
<dbReference type="InterPro" id="IPR011773">
    <property type="entry name" value="DNA-dir_RpoA"/>
</dbReference>
<dbReference type="InterPro" id="IPR036603">
    <property type="entry name" value="RBP11-like"/>
</dbReference>
<dbReference type="InterPro" id="IPR011260">
    <property type="entry name" value="RNAP_asu_C"/>
</dbReference>
<dbReference type="InterPro" id="IPR036643">
    <property type="entry name" value="RNApol_insert_sf"/>
</dbReference>
<dbReference type="NCBIfam" id="NF003513">
    <property type="entry name" value="PRK05182.1-2"/>
    <property type="match status" value="1"/>
</dbReference>
<dbReference type="NCBIfam" id="NF003519">
    <property type="entry name" value="PRK05182.2-5"/>
    <property type="match status" value="1"/>
</dbReference>
<dbReference type="NCBIfam" id="TIGR02027">
    <property type="entry name" value="rpoA"/>
    <property type="match status" value="1"/>
</dbReference>
<dbReference type="Pfam" id="PF01000">
    <property type="entry name" value="RNA_pol_A_bac"/>
    <property type="match status" value="1"/>
</dbReference>
<dbReference type="Pfam" id="PF03118">
    <property type="entry name" value="RNA_pol_A_CTD"/>
    <property type="match status" value="1"/>
</dbReference>
<dbReference type="Pfam" id="PF01193">
    <property type="entry name" value="RNA_pol_L"/>
    <property type="match status" value="1"/>
</dbReference>
<dbReference type="SMART" id="SM00662">
    <property type="entry name" value="RPOLD"/>
    <property type="match status" value="1"/>
</dbReference>
<dbReference type="SUPFAM" id="SSF47789">
    <property type="entry name" value="C-terminal domain of RNA polymerase alpha subunit"/>
    <property type="match status" value="1"/>
</dbReference>
<dbReference type="SUPFAM" id="SSF56553">
    <property type="entry name" value="Insert subdomain of RNA polymerase alpha subunit"/>
    <property type="match status" value="1"/>
</dbReference>
<dbReference type="SUPFAM" id="SSF55257">
    <property type="entry name" value="RBP11-like subunits of RNA polymerase"/>
    <property type="match status" value="1"/>
</dbReference>
<name>RPOA_METFK</name>
<organism>
    <name type="scientific">Methylobacillus flagellatus (strain ATCC 51484 / DSM 6875 / VKM B-1610 / KT)</name>
    <dbReference type="NCBI Taxonomy" id="265072"/>
    <lineage>
        <taxon>Bacteria</taxon>
        <taxon>Pseudomonadati</taxon>
        <taxon>Pseudomonadota</taxon>
        <taxon>Betaproteobacteria</taxon>
        <taxon>Nitrosomonadales</taxon>
        <taxon>Methylophilaceae</taxon>
        <taxon>Methylobacillus</taxon>
    </lineage>
</organism>
<reference key="1">
    <citation type="submission" date="2006-03" db="EMBL/GenBank/DDBJ databases">
        <title>Complete sequence of Methylobacillus flagellatus KT.</title>
        <authorList>
            <consortium name="US DOE Joint Genome Institute"/>
            <person name="Copeland A."/>
            <person name="Lucas S."/>
            <person name="Lapidus A."/>
            <person name="Barry K."/>
            <person name="Detter J.C."/>
            <person name="Glavina del Rio T."/>
            <person name="Hammon N."/>
            <person name="Israni S."/>
            <person name="Dalin E."/>
            <person name="Tice H."/>
            <person name="Pitluck S."/>
            <person name="Brettin T."/>
            <person name="Bruce D."/>
            <person name="Han C."/>
            <person name="Tapia R."/>
            <person name="Saunders E."/>
            <person name="Gilna P."/>
            <person name="Schmutz J."/>
            <person name="Larimer F."/>
            <person name="Land M."/>
            <person name="Kyrpides N."/>
            <person name="Anderson I."/>
            <person name="Richardson P."/>
        </authorList>
    </citation>
    <scope>NUCLEOTIDE SEQUENCE [LARGE SCALE GENOMIC DNA]</scope>
    <source>
        <strain>ATCC 51484 / DSM 6875 / VKM B-1610 / KT</strain>
    </source>
</reference>
<evidence type="ECO:0000255" key="1">
    <source>
        <dbReference type="HAMAP-Rule" id="MF_00059"/>
    </source>
</evidence>
<gene>
    <name evidence="1" type="primary">rpoA</name>
    <name type="ordered locus">Mfla_0304</name>
</gene>
<sequence length="328" mass="36101">MQNSPTEYLKPRVVDVDVISPVRARVTLEPMERGFGYTLGNALRRVLLSSIPGFAITEVKIDGVVHEYSTLDGVQEDVVDILLNLKGVALKLNSKNEATLTLNKSTEGVVTAGDFDTGHDAEIANPDHVIAHLTKGGKLNLEVKVEMGRGYQPVPQRRKTEDEDRVLGFIQVDASFSPISKVSYQVESARVEQRTDLDKLIMDVETNGIIEPEQAIRDAARILMGQLSVFADLEGAPSEVEVKQAPQVDPILLRPVDDLELTVRSANCLKAENIYYIGDLIQRTENELLKAPNLGRKSLNEIKDVLASKGLTLGMKLENWPPAGLEKV</sequence>
<feature type="chain" id="PRO_0000264515" description="DNA-directed RNA polymerase subunit alpha">
    <location>
        <begin position="1"/>
        <end position="328"/>
    </location>
</feature>
<feature type="region of interest" description="Alpha N-terminal domain (alpha-NTD)" evidence="1">
    <location>
        <begin position="1"/>
        <end position="234"/>
    </location>
</feature>
<feature type="region of interest" description="Alpha C-terminal domain (alpha-CTD)" evidence="1">
    <location>
        <begin position="248"/>
        <end position="328"/>
    </location>
</feature>
<comment type="function">
    <text evidence="1">DNA-dependent RNA polymerase catalyzes the transcription of DNA into RNA using the four ribonucleoside triphosphates as substrates.</text>
</comment>
<comment type="catalytic activity">
    <reaction evidence="1">
        <text>RNA(n) + a ribonucleoside 5'-triphosphate = RNA(n+1) + diphosphate</text>
        <dbReference type="Rhea" id="RHEA:21248"/>
        <dbReference type="Rhea" id="RHEA-COMP:14527"/>
        <dbReference type="Rhea" id="RHEA-COMP:17342"/>
        <dbReference type="ChEBI" id="CHEBI:33019"/>
        <dbReference type="ChEBI" id="CHEBI:61557"/>
        <dbReference type="ChEBI" id="CHEBI:140395"/>
        <dbReference type="EC" id="2.7.7.6"/>
    </reaction>
</comment>
<comment type="subunit">
    <text evidence="1">Homodimer. The RNAP catalytic core consists of 2 alpha, 1 beta, 1 beta' and 1 omega subunit. When a sigma factor is associated with the core the holoenzyme is formed, which can initiate transcription.</text>
</comment>
<comment type="domain">
    <text evidence="1">The N-terminal domain is essential for RNAP assembly and basal transcription, whereas the C-terminal domain is involved in interaction with transcriptional regulators and with upstream promoter elements.</text>
</comment>
<comment type="similarity">
    <text evidence="1">Belongs to the RNA polymerase alpha chain family.</text>
</comment>
<keyword id="KW-0240">DNA-directed RNA polymerase</keyword>
<keyword id="KW-0548">Nucleotidyltransferase</keyword>
<keyword id="KW-1185">Reference proteome</keyword>
<keyword id="KW-0804">Transcription</keyword>
<keyword id="KW-0808">Transferase</keyword>
<protein>
    <recommendedName>
        <fullName evidence="1">DNA-directed RNA polymerase subunit alpha</fullName>
        <shortName evidence="1">RNAP subunit alpha</shortName>
        <ecNumber evidence="1">2.7.7.6</ecNumber>
    </recommendedName>
    <alternativeName>
        <fullName evidence="1">RNA polymerase subunit alpha</fullName>
    </alternativeName>
    <alternativeName>
        <fullName evidence="1">Transcriptase subunit alpha</fullName>
    </alternativeName>
</protein>